<evidence type="ECO:0000255" key="1">
    <source>
        <dbReference type="HAMAP-Rule" id="MF_03119"/>
    </source>
</evidence>
<proteinExistence type="inferred from homology"/>
<feature type="chain" id="PRO_0000401977" description="Methylthioribose-1-phosphate isomerase">
    <location>
        <begin position="1"/>
        <end position="363"/>
    </location>
</feature>
<feature type="active site" description="Proton donor" evidence="1">
    <location>
        <position position="253"/>
    </location>
</feature>
<feature type="site" description="Transition state stabilizer" evidence="1">
    <location>
        <position position="173"/>
    </location>
</feature>
<organism>
    <name type="scientific">Drosophila grimshawi</name>
    <name type="common">Hawaiian fruit fly</name>
    <name type="synonym">Idiomyia grimshawi</name>
    <dbReference type="NCBI Taxonomy" id="7222"/>
    <lineage>
        <taxon>Eukaryota</taxon>
        <taxon>Metazoa</taxon>
        <taxon>Ecdysozoa</taxon>
        <taxon>Arthropoda</taxon>
        <taxon>Hexapoda</taxon>
        <taxon>Insecta</taxon>
        <taxon>Pterygota</taxon>
        <taxon>Neoptera</taxon>
        <taxon>Endopterygota</taxon>
        <taxon>Diptera</taxon>
        <taxon>Brachycera</taxon>
        <taxon>Muscomorpha</taxon>
        <taxon>Ephydroidea</taxon>
        <taxon>Drosophilidae</taxon>
        <taxon>Drosophila</taxon>
        <taxon>Hawaiian Drosophila</taxon>
    </lineage>
</organism>
<keyword id="KW-0028">Amino-acid biosynthesis</keyword>
<keyword id="KW-0963">Cytoplasm</keyword>
<keyword id="KW-0413">Isomerase</keyword>
<keyword id="KW-0486">Methionine biosynthesis</keyword>
<keyword id="KW-0539">Nucleus</keyword>
<keyword id="KW-1185">Reference proteome</keyword>
<comment type="function">
    <text evidence="1">Catalyzes the interconversion of methylthioribose-1-phosphate (MTR-1-P) into methylthioribulose-1-phosphate (MTRu-1-P).</text>
</comment>
<comment type="catalytic activity">
    <reaction evidence="1">
        <text>5-(methylsulfanyl)-alpha-D-ribose 1-phosphate = 5-(methylsulfanyl)-D-ribulose 1-phosphate</text>
        <dbReference type="Rhea" id="RHEA:19989"/>
        <dbReference type="ChEBI" id="CHEBI:58533"/>
        <dbReference type="ChEBI" id="CHEBI:58548"/>
        <dbReference type="EC" id="5.3.1.23"/>
    </reaction>
</comment>
<comment type="pathway">
    <text evidence="1">Amino-acid biosynthesis; L-methionine biosynthesis via salvage pathway; L-methionine from S-methyl-5-thio-alpha-D-ribose 1-phosphate: step 1/6.</text>
</comment>
<comment type="subcellular location">
    <subcellularLocation>
        <location evidence="1">Cytoplasm</location>
    </subcellularLocation>
    <subcellularLocation>
        <location evidence="1">Nucleus</location>
    </subcellularLocation>
</comment>
<comment type="similarity">
    <text evidence="1">Belongs to the eIF-2B alpha/beta/delta subunits family. MtnA subfamily.</text>
</comment>
<protein>
    <recommendedName>
        <fullName evidence="1">Methylthioribose-1-phosphate isomerase</fullName>
        <shortName evidence="1">M1Pi</shortName>
        <shortName evidence="1">MTR-1-P isomerase</shortName>
        <ecNumber evidence="1">5.3.1.23</ecNumber>
    </recommendedName>
    <alternativeName>
        <fullName evidence="1">S-methyl-5-thioribose-1-phosphate isomerase</fullName>
    </alternativeName>
    <alternativeName>
        <fullName evidence="1">Translation initiation factor eIF-2B subunit alpha/beta/delta-like protein</fullName>
    </alternativeName>
</protein>
<name>MTNA_DROGR</name>
<gene>
    <name type="ORF">GH21593</name>
</gene>
<accession>B4JRX2</accession>
<dbReference type="EC" id="5.3.1.23" evidence="1"/>
<dbReference type="EMBL" id="CH916373">
    <property type="protein sequence ID" value="EDV94512.1"/>
    <property type="molecule type" value="Genomic_DNA"/>
</dbReference>
<dbReference type="SMR" id="B4JRX2"/>
<dbReference type="FunCoup" id="B4JRX2">
    <property type="interactions" value="1599"/>
</dbReference>
<dbReference type="STRING" id="7222.B4JRX2"/>
<dbReference type="EnsemblMetazoa" id="FBtr0157007">
    <property type="protein sequence ID" value="FBpp0155499"/>
    <property type="gene ID" value="FBgn0129054"/>
</dbReference>
<dbReference type="EnsemblMetazoa" id="FBtr0453317">
    <property type="protein sequence ID" value="FBpp0403973"/>
    <property type="gene ID" value="FBgn0129054"/>
</dbReference>
<dbReference type="EnsemblMetazoa" id="XM_001993740.2">
    <property type="protein sequence ID" value="XP_001993776.1"/>
    <property type="gene ID" value="LOC6567692"/>
</dbReference>
<dbReference type="EnsemblMetazoa" id="XM_032740116.2">
    <property type="protein sequence ID" value="XP_032596007.1"/>
    <property type="gene ID" value="LOC6567692"/>
</dbReference>
<dbReference type="EnsemblMetazoa" id="XM_043215029.1">
    <property type="protein sequence ID" value="XP_043070964.1"/>
    <property type="gene ID" value="LOC6567692"/>
</dbReference>
<dbReference type="GeneID" id="6567692"/>
<dbReference type="KEGG" id="dgr:6567692"/>
<dbReference type="eggNOG" id="KOG1468">
    <property type="taxonomic scope" value="Eukaryota"/>
</dbReference>
<dbReference type="HOGENOM" id="CLU_016218_1_3_1"/>
<dbReference type="InParanoid" id="B4JRX2"/>
<dbReference type="OMA" id="CETRPLN"/>
<dbReference type="OrthoDB" id="2461at2759"/>
<dbReference type="PhylomeDB" id="B4JRX2"/>
<dbReference type="UniPathway" id="UPA00904">
    <property type="reaction ID" value="UER00874"/>
</dbReference>
<dbReference type="Proteomes" id="UP000001070">
    <property type="component" value="Unassembled WGS sequence"/>
</dbReference>
<dbReference type="GO" id="GO:0005737">
    <property type="term" value="C:cytoplasm"/>
    <property type="evidence" value="ECO:0007669"/>
    <property type="project" value="UniProtKB-SubCell"/>
</dbReference>
<dbReference type="GO" id="GO:0005634">
    <property type="term" value="C:nucleus"/>
    <property type="evidence" value="ECO:0007669"/>
    <property type="project" value="UniProtKB-SubCell"/>
</dbReference>
<dbReference type="GO" id="GO:0046523">
    <property type="term" value="F:S-methyl-5-thioribose-1-phosphate isomerase activity"/>
    <property type="evidence" value="ECO:0007669"/>
    <property type="project" value="UniProtKB-UniRule"/>
</dbReference>
<dbReference type="GO" id="GO:0019509">
    <property type="term" value="P:L-methionine salvage from methylthioadenosine"/>
    <property type="evidence" value="ECO:0007669"/>
    <property type="project" value="UniProtKB-UniRule"/>
</dbReference>
<dbReference type="FunFam" id="1.20.120.420:FF:000010">
    <property type="entry name" value="Methylthioribose-1-phosphate isomerase"/>
    <property type="match status" value="1"/>
</dbReference>
<dbReference type="FunFam" id="3.40.50.10470:FF:000003">
    <property type="entry name" value="Methylthioribose-1-phosphate isomerase"/>
    <property type="match status" value="1"/>
</dbReference>
<dbReference type="Gene3D" id="1.20.120.420">
    <property type="entry name" value="translation initiation factor eif-2b, domain 1"/>
    <property type="match status" value="1"/>
</dbReference>
<dbReference type="Gene3D" id="3.40.50.10470">
    <property type="entry name" value="Translation initiation factor eif-2b, domain 2"/>
    <property type="match status" value="1"/>
</dbReference>
<dbReference type="HAMAP" id="MF_01678">
    <property type="entry name" value="Salvage_MtnA"/>
    <property type="match status" value="1"/>
</dbReference>
<dbReference type="InterPro" id="IPR000649">
    <property type="entry name" value="IF-2B-related"/>
</dbReference>
<dbReference type="InterPro" id="IPR005251">
    <property type="entry name" value="IF-M1Pi"/>
</dbReference>
<dbReference type="InterPro" id="IPR042529">
    <property type="entry name" value="IF_2B-like_C"/>
</dbReference>
<dbReference type="InterPro" id="IPR011559">
    <property type="entry name" value="Initiation_fac_2B_a/b/d"/>
</dbReference>
<dbReference type="InterPro" id="IPR027363">
    <property type="entry name" value="M1Pi_N"/>
</dbReference>
<dbReference type="InterPro" id="IPR037171">
    <property type="entry name" value="NagB/RpiA_transferase-like"/>
</dbReference>
<dbReference type="NCBIfam" id="TIGR00524">
    <property type="entry name" value="eIF-2B_rel"/>
    <property type="match status" value="1"/>
</dbReference>
<dbReference type="NCBIfam" id="NF004326">
    <property type="entry name" value="PRK05720.1"/>
    <property type="match status" value="1"/>
</dbReference>
<dbReference type="NCBIfam" id="TIGR00512">
    <property type="entry name" value="salvage_mtnA"/>
    <property type="match status" value="1"/>
</dbReference>
<dbReference type="PANTHER" id="PTHR43475">
    <property type="entry name" value="METHYLTHIORIBOSE-1-PHOSPHATE ISOMERASE"/>
    <property type="match status" value="1"/>
</dbReference>
<dbReference type="PANTHER" id="PTHR43475:SF1">
    <property type="entry name" value="METHYLTHIORIBOSE-1-PHOSPHATE ISOMERASE"/>
    <property type="match status" value="1"/>
</dbReference>
<dbReference type="Pfam" id="PF01008">
    <property type="entry name" value="IF-2B"/>
    <property type="match status" value="1"/>
</dbReference>
<dbReference type="SUPFAM" id="SSF100950">
    <property type="entry name" value="NagB/RpiA/CoA transferase-like"/>
    <property type="match status" value="1"/>
</dbReference>
<sequence length="363" mass="39217">MSLQSIKYKRGSLEILDQLLLPVVSKYLPVRGVEDGWKVINKMQVRGAPAIAIVGCLSLAVEIYPEEFETKKSLRQEIEGKLNYLVSARPTAVNMKISADELITLANELSKNDDVTVANMKQRFLDATEAMLEKDIADNRAIGSNGAKAILERVAEATGSPGSASPVRVLTHCNTGSLATAGYGTALGVVRHLSELGKLEHVYCTETRPYNQGARLTAYELVHEKLPATLVLDSMVAALFRVKNVAAVVVGADRVAANGDTANKIGTYQIAVVAKHHGVPFYVAAPLTSIDLQIPSGEHIIIEVRPDREMTHVGEHRIAAPGINCWNPAFDVTPASLITGIITEHGVFKPSTLKDEIAKLIEL</sequence>
<reference key="1">
    <citation type="journal article" date="2007" name="Nature">
        <title>Evolution of genes and genomes on the Drosophila phylogeny.</title>
        <authorList>
            <consortium name="Drosophila 12 genomes consortium"/>
        </authorList>
    </citation>
    <scope>NUCLEOTIDE SEQUENCE [LARGE SCALE GENOMIC DNA]</scope>
    <source>
        <strain>Tucson 15287-2541.00</strain>
    </source>
</reference>